<gene>
    <name evidence="11" type="primary">Pks2</name>
    <name type="ORF">MAA_03239</name>
</gene>
<evidence type="ECO:0000250" key="1">
    <source>
        <dbReference type="UniProtKB" id="Q03149"/>
    </source>
</evidence>
<evidence type="ECO:0000255" key="2"/>
<evidence type="ECO:0000255" key="3">
    <source>
        <dbReference type="PROSITE-ProRule" id="PRU00258"/>
    </source>
</evidence>
<evidence type="ECO:0000255" key="4">
    <source>
        <dbReference type="PROSITE-ProRule" id="PRU01348"/>
    </source>
</evidence>
<evidence type="ECO:0000255" key="5">
    <source>
        <dbReference type="PROSITE-ProRule" id="PRU01363"/>
    </source>
</evidence>
<evidence type="ECO:0000255" key="6">
    <source>
        <dbReference type="PROSITE-ProRule" id="PRU10022"/>
    </source>
</evidence>
<evidence type="ECO:0000256" key="7">
    <source>
        <dbReference type="SAM" id="MobiDB-lite"/>
    </source>
</evidence>
<evidence type="ECO:0000269" key="8">
    <source>
    </source>
</evidence>
<evidence type="ECO:0000269" key="9">
    <source>
    </source>
</evidence>
<evidence type="ECO:0000269" key="10">
    <source>
    </source>
</evidence>
<evidence type="ECO:0000303" key="11">
    <source>
    </source>
</evidence>
<evidence type="ECO:0000305" key="12">
    <source>
    </source>
</evidence>
<protein>
    <recommendedName>
        <fullName evidence="11">Polyketide synthase 2</fullName>
        <ecNumber evidence="12">2.3.1.-</ecNumber>
    </recommendedName>
</protein>
<feature type="chain" id="PRO_0000445752" description="Polyketide synthase 2">
    <location>
        <begin position="1"/>
        <end position="2157"/>
    </location>
</feature>
<feature type="domain" description="Ketosynthase family 3 (KS3)" evidence="4 12">
    <location>
        <begin position="374"/>
        <end position="807"/>
    </location>
</feature>
<feature type="domain" description="PKS/mFAS DH" evidence="5">
    <location>
        <begin position="1294"/>
        <end position="1600"/>
    </location>
</feature>
<feature type="domain" description="Carrier 1" evidence="3 12">
    <location>
        <begin position="1649"/>
        <end position="1726"/>
    </location>
</feature>
<feature type="domain" description="Carrier 2" evidence="3 12">
    <location>
        <begin position="1765"/>
        <end position="1839"/>
    </location>
</feature>
<feature type="region of interest" description="N-terminal acylcarrier protein transacylase domain (SAT)" evidence="2 12">
    <location>
        <begin position="7"/>
        <end position="244"/>
    </location>
</feature>
<feature type="region of interest" description="Malonyl-CoA:ACP transacylase (MAT) domain" evidence="2 12">
    <location>
        <begin position="908"/>
        <end position="1213"/>
    </location>
</feature>
<feature type="region of interest" description="Product template (PT) domain" evidence="2 12">
    <location>
        <begin position="1290"/>
        <end position="1605"/>
    </location>
</feature>
<feature type="region of interest" description="N-terminal hotdog fold" evidence="5">
    <location>
        <begin position="1294"/>
        <end position="1428"/>
    </location>
</feature>
<feature type="region of interest" description="C-terminal hotdog fold" evidence="5">
    <location>
        <begin position="1455"/>
        <end position="1600"/>
    </location>
</feature>
<feature type="region of interest" description="Disordered" evidence="7">
    <location>
        <begin position="1626"/>
        <end position="1652"/>
    </location>
</feature>
<feature type="region of interest" description="Disordered" evidence="7">
    <location>
        <begin position="1733"/>
        <end position="1762"/>
    </location>
</feature>
<feature type="region of interest" description="Disordered" evidence="7">
    <location>
        <begin position="1840"/>
        <end position="1859"/>
    </location>
</feature>
<feature type="region of interest" description="Thioesterase (TE) domain" evidence="2 12">
    <location>
        <begin position="1875"/>
        <end position="2151"/>
    </location>
</feature>
<feature type="compositionally biased region" description="Polar residues" evidence="7">
    <location>
        <begin position="1643"/>
        <end position="1652"/>
    </location>
</feature>
<feature type="compositionally biased region" description="Polar residues" evidence="7">
    <location>
        <begin position="1735"/>
        <end position="1755"/>
    </location>
</feature>
<feature type="active site" description="For beta-ketoacyl synthase activity" evidence="4">
    <location>
        <position position="546"/>
    </location>
</feature>
<feature type="active site" description="For beta-ketoacyl synthase activity" evidence="4">
    <location>
        <position position="681"/>
    </location>
</feature>
<feature type="active site" description="For beta-ketoacyl synthase activity" evidence="4">
    <location>
        <position position="723"/>
    </location>
</feature>
<feature type="active site" description="For acyl/malonyl transferase activity" evidence="6">
    <location>
        <position position="998"/>
    </location>
</feature>
<feature type="active site" description="Proton acceptor; for dehydratase activity" evidence="5">
    <location>
        <position position="1327"/>
    </location>
</feature>
<feature type="active site" description="Proton donor; for dehydratase activity" evidence="5">
    <location>
        <position position="1514"/>
    </location>
</feature>
<feature type="active site" description="For thioesterase activity" evidence="1">
    <location>
        <position position="1981"/>
    </location>
</feature>
<feature type="modified residue" description="O-(pantetheine 4'-phosphoryl)serine" evidence="3">
    <location>
        <position position="1686"/>
    </location>
</feature>
<feature type="modified residue" description="O-(pantetheine 4'-phosphoryl)serine" evidence="3">
    <location>
        <position position="1799"/>
    </location>
</feature>
<proteinExistence type="evidence at transcript level"/>
<dbReference type="EC" id="2.3.1.-" evidence="12"/>
<dbReference type="EMBL" id="ADNJ02000004">
    <property type="protein sequence ID" value="EFZ02010.2"/>
    <property type="molecule type" value="Genomic_DNA"/>
</dbReference>
<dbReference type="RefSeq" id="XP_007819428.2">
    <property type="nucleotide sequence ID" value="XM_007821237.2"/>
</dbReference>
<dbReference type="SMR" id="E9ET39"/>
<dbReference type="ESTHER" id="metra-pks2">
    <property type="family name" value="Thioesterase"/>
</dbReference>
<dbReference type="GeneID" id="19257525"/>
<dbReference type="KEGG" id="maj:MAA_03239"/>
<dbReference type="HOGENOM" id="CLU_000022_6_0_1"/>
<dbReference type="OrthoDB" id="329835at2759"/>
<dbReference type="Proteomes" id="UP000002498">
    <property type="component" value="Unassembled WGS sequence"/>
</dbReference>
<dbReference type="GO" id="GO:0004315">
    <property type="term" value="F:3-oxoacyl-[acyl-carrier-protein] synthase activity"/>
    <property type="evidence" value="ECO:0007669"/>
    <property type="project" value="InterPro"/>
</dbReference>
<dbReference type="GO" id="GO:0004312">
    <property type="term" value="F:fatty acid synthase activity"/>
    <property type="evidence" value="ECO:0007669"/>
    <property type="project" value="TreeGrafter"/>
</dbReference>
<dbReference type="GO" id="GO:0031177">
    <property type="term" value="F:phosphopantetheine binding"/>
    <property type="evidence" value="ECO:0007669"/>
    <property type="project" value="InterPro"/>
</dbReference>
<dbReference type="GO" id="GO:0006633">
    <property type="term" value="P:fatty acid biosynthetic process"/>
    <property type="evidence" value="ECO:0007669"/>
    <property type="project" value="InterPro"/>
</dbReference>
<dbReference type="GO" id="GO:0046189">
    <property type="term" value="P:phenol-containing compound biosynthetic process"/>
    <property type="evidence" value="ECO:0007669"/>
    <property type="project" value="UniProtKB-ARBA"/>
</dbReference>
<dbReference type="GO" id="GO:0030639">
    <property type="term" value="P:polyketide biosynthetic process"/>
    <property type="evidence" value="ECO:0007669"/>
    <property type="project" value="UniProtKB-ARBA"/>
</dbReference>
<dbReference type="GO" id="GO:0009403">
    <property type="term" value="P:toxin biosynthetic process"/>
    <property type="evidence" value="ECO:0007669"/>
    <property type="project" value="UniProtKB-ARBA"/>
</dbReference>
<dbReference type="CDD" id="cd00833">
    <property type="entry name" value="PKS"/>
    <property type="match status" value="1"/>
</dbReference>
<dbReference type="FunFam" id="3.40.366.10:FF:000002">
    <property type="entry name" value="Probable polyketide synthase 2"/>
    <property type="match status" value="1"/>
</dbReference>
<dbReference type="FunFam" id="1.10.1200.10:FF:000011">
    <property type="entry name" value="Sterigmatocystin biosynthesis polyketide synthase"/>
    <property type="match status" value="2"/>
</dbReference>
<dbReference type="FunFam" id="3.10.129.110:FF:000001">
    <property type="entry name" value="Sterigmatocystin biosynthesis polyketide synthase"/>
    <property type="match status" value="1"/>
</dbReference>
<dbReference type="FunFam" id="3.40.47.10:FF:000031">
    <property type="entry name" value="Sterigmatocystin biosynthesis polyketide synthase"/>
    <property type="match status" value="1"/>
</dbReference>
<dbReference type="Gene3D" id="3.30.70.3290">
    <property type="match status" value="1"/>
</dbReference>
<dbReference type="Gene3D" id="3.40.47.10">
    <property type="match status" value="1"/>
</dbReference>
<dbReference type="Gene3D" id="1.10.1200.10">
    <property type="entry name" value="ACP-like"/>
    <property type="match status" value="2"/>
</dbReference>
<dbReference type="Gene3D" id="3.40.50.1820">
    <property type="entry name" value="alpha/beta hydrolase"/>
    <property type="match status" value="1"/>
</dbReference>
<dbReference type="Gene3D" id="3.40.366.10">
    <property type="entry name" value="Malonyl-Coenzyme A Acyl Carrier Protein, domain 2"/>
    <property type="match status" value="2"/>
</dbReference>
<dbReference type="Gene3D" id="3.10.129.110">
    <property type="entry name" value="Polyketide synthase dehydratase"/>
    <property type="match status" value="1"/>
</dbReference>
<dbReference type="InterPro" id="IPR029058">
    <property type="entry name" value="AB_hydrolase_fold"/>
</dbReference>
<dbReference type="InterPro" id="IPR001227">
    <property type="entry name" value="Ac_transferase_dom_sf"/>
</dbReference>
<dbReference type="InterPro" id="IPR036736">
    <property type="entry name" value="ACP-like_sf"/>
</dbReference>
<dbReference type="InterPro" id="IPR014043">
    <property type="entry name" value="Acyl_transferase_dom"/>
</dbReference>
<dbReference type="InterPro" id="IPR016035">
    <property type="entry name" value="Acyl_Trfase/lysoPLipase"/>
</dbReference>
<dbReference type="InterPro" id="IPR018201">
    <property type="entry name" value="Ketoacyl_synth_AS"/>
</dbReference>
<dbReference type="InterPro" id="IPR014031">
    <property type="entry name" value="Ketoacyl_synth_C"/>
</dbReference>
<dbReference type="InterPro" id="IPR014030">
    <property type="entry name" value="Ketoacyl_synth_N"/>
</dbReference>
<dbReference type="InterPro" id="IPR016036">
    <property type="entry name" value="Malonyl_transacylase_ACP-bd"/>
</dbReference>
<dbReference type="InterPro" id="IPR020841">
    <property type="entry name" value="PKS_Beta-ketoAc_synthase_dom"/>
</dbReference>
<dbReference type="InterPro" id="IPR042104">
    <property type="entry name" value="PKS_dehydratase_sf"/>
</dbReference>
<dbReference type="InterPro" id="IPR049551">
    <property type="entry name" value="PKS_DH_C"/>
</dbReference>
<dbReference type="InterPro" id="IPR049900">
    <property type="entry name" value="PKS_mFAS_DH"/>
</dbReference>
<dbReference type="InterPro" id="IPR050091">
    <property type="entry name" value="PKS_NRPS_Biosynth_Enz"/>
</dbReference>
<dbReference type="InterPro" id="IPR020806">
    <property type="entry name" value="PKS_PP-bd"/>
</dbReference>
<dbReference type="InterPro" id="IPR009081">
    <property type="entry name" value="PP-bd_ACP"/>
</dbReference>
<dbReference type="InterPro" id="IPR006162">
    <property type="entry name" value="Ppantetheine_attach_site"/>
</dbReference>
<dbReference type="InterPro" id="IPR030918">
    <property type="entry name" value="PT_fungal_PKS"/>
</dbReference>
<dbReference type="InterPro" id="IPR032088">
    <property type="entry name" value="SAT"/>
</dbReference>
<dbReference type="InterPro" id="IPR001031">
    <property type="entry name" value="Thioesterase"/>
</dbReference>
<dbReference type="InterPro" id="IPR016039">
    <property type="entry name" value="Thiolase-like"/>
</dbReference>
<dbReference type="NCBIfam" id="TIGR04532">
    <property type="entry name" value="PT_fungal_PKS"/>
    <property type="match status" value="1"/>
</dbReference>
<dbReference type="PANTHER" id="PTHR43775">
    <property type="entry name" value="FATTY ACID SYNTHASE"/>
    <property type="match status" value="1"/>
</dbReference>
<dbReference type="PANTHER" id="PTHR43775:SF37">
    <property type="entry name" value="SI:DKEY-61P9.11"/>
    <property type="match status" value="1"/>
</dbReference>
<dbReference type="Pfam" id="PF00698">
    <property type="entry name" value="Acyl_transf_1"/>
    <property type="match status" value="1"/>
</dbReference>
<dbReference type="Pfam" id="PF22621">
    <property type="entry name" value="CurL-like_PKS_C"/>
    <property type="match status" value="1"/>
</dbReference>
<dbReference type="Pfam" id="PF00109">
    <property type="entry name" value="ketoacyl-synt"/>
    <property type="match status" value="1"/>
</dbReference>
<dbReference type="Pfam" id="PF02801">
    <property type="entry name" value="Ketoacyl-synt_C"/>
    <property type="match status" value="1"/>
</dbReference>
<dbReference type="Pfam" id="PF00550">
    <property type="entry name" value="PP-binding"/>
    <property type="match status" value="2"/>
</dbReference>
<dbReference type="Pfam" id="PF14765">
    <property type="entry name" value="PS-DH"/>
    <property type="match status" value="1"/>
</dbReference>
<dbReference type="Pfam" id="PF16073">
    <property type="entry name" value="SAT"/>
    <property type="match status" value="1"/>
</dbReference>
<dbReference type="Pfam" id="PF00975">
    <property type="entry name" value="Thioesterase"/>
    <property type="match status" value="1"/>
</dbReference>
<dbReference type="SMART" id="SM00827">
    <property type="entry name" value="PKS_AT"/>
    <property type="match status" value="1"/>
</dbReference>
<dbReference type="SMART" id="SM00825">
    <property type="entry name" value="PKS_KS"/>
    <property type="match status" value="1"/>
</dbReference>
<dbReference type="SMART" id="SM00823">
    <property type="entry name" value="PKS_PP"/>
    <property type="match status" value="2"/>
</dbReference>
<dbReference type="SUPFAM" id="SSF47336">
    <property type="entry name" value="ACP-like"/>
    <property type="match status" value="2"/>
</dbReference>
<dbReference type="SUPFAM" id="SSF53474">
    <property type="entry name" value="alpha/beta-Hydrolases"/>
    <property type="match status" value="1"/>
</dbReference>
<dbReference type="SUPFAM" id="SSF52151">
    <property type="entry name" value="FabD/lysophospholipase-like"/>
    <property type="match status" value="1"/>
</dbReference>
<dbReference type="SUPFAM" id="SSF55048">
    <property type="entry name" value="Probable ACP-binding domain of malonyl-CoA ACP transacylase"/>
    <property type="match status" value="1"/>
</dbReference>
<dbReference type="SUPFAM" id="SSF53901">
    <property type="entry name" value="Thiolase-like"/>
    <property type="match status" value="1"/>
</dbReference>
<dbReference type="PROSITE" id="PS50075">
    <property type="entry name" value="CARRIER"/>
    <property type="match status" value="2"/>
</dbReference>
<dbReference type="PROSITE" id="PS00606">
    <property type="entry name" value="KS3_1"/>
    <property type="match status" value="1"/>
</dbReference>
<dbReference type="PROSITE" id="PS52004">
    <property type="entry name" value="KS3_2"/>
    <property type="match status" value="1"/>
</dbReference>
<dbReference type="PROSITE" id="PS00012">
    <property type="entry name" value="PHOSPHOPANTETHEINE"/>
    <property type="match status" value="2"/>
</dbReference>
<dbReference type="PROSITE" id="PS52019">
    <property type="entry name" value="PKS_MFAS_DH"/>
    <property type="match status" value="1"/>
</dbReference>
<comment type="function">
    <text evidence="10">Polyketide synthase; part of the Pks2 gene cluster that mediates the formation of infectious structures (appressoria), enabling these fungi to kill insects faster (PubMed:29958281). The product of the Pks2 gene cluster is different from the one of Pks1 and has still not been identified (PubMed:29958281).</text>
</comment>
<comment type="induction">
    <text evidence="9 10">Expression is up-regulated in appressoria-forming germlings on locust cuticle (PubMed:26714892, PubMed:29958281). Expression is positively regulated by the Fus3 MAPK and negatively regulated by Opy2 (PubMed:29958281).</text>
</comment>
<comment type="domain">
    <text evidence="12">Multidomain protein; including a starter unit:ACP transacylase (SAT) that selects the starter unit; a ketosynthase (KS) that catalyzes repeated decarboxylative condensation to elongate the polyketide backbone; a malonyl-CoA:ACP transacylase (MAT) that selects and transfers the extender unit malonyl-CoA; a product template (PT) domain that controls the immediate cyclization regioselectivity of the reactive polyketide backbone; and an acyl-carrier protein (ACP) that serves as the tether of the growing and completed polyketide via its phosphopantetheinyl arm.</text>
</comment>
<comment type="domain">
    <text evidence="12">The release of the polyketide chain from the non-reducing polyketide synthase is mediated by the thioesterase (TE) domain localized at the C-ter of the protein.</text>
</comment>
<comment type="disruption phenotype">
    <text evidence="8">Does not affect conidial pigmentation.</text>
</comment>
<reference key="1">
    <citation type="journal article" date="2011" name="PLoS Genet.">
        <title>Genome sequencing and comparative transcriptomics of the model entomopathogenic fungi Metarhizium anisopliae and M. acridum.</title>
        <authorList>
            <person name="Gao Q."/>
            <person name="Jin K."/>
            <person name="Ying S.-H."/>
            <person name="Zhang Y."/>
            <person name="Xiao G."/>
            <person name="Shang Y."/>
            <person name="Duan Z."/>
            <person name="Hu X."/>
            <person name="Xie X.-Q."/>
            <person name="Zhou G."/>
            <person name="Peng G."/>
            <person name="Luo Z."/>
            <person name="Huang W."/>
            <person name="Wang B."/>
            <person name="Fang W."/>
            <person name="Wang S."/>
            <person name="Zhong Y."/>
            <person name="Ma L.-J."/>
            <person name="St Leger R.J."/>
            <person name="Zhao G.-P."/>
            <person name="Pei Y."/>
            <person name="Feng M.-G."/>
            <person name="Xia Y."/>
            <person name="Wang C."/>
        </authorList>
    </citation>
    <scope>NUCLEOTIDE SEQUENCE [LARGE SCALE GENOMIC DNA]</scope>
    <source>
        <strain>ARSEF 23 / ATCC MYA-3075</strain>
    </source>
</reference>
<reference key="2">
    <citation type="journal article" date="2014" name="Proc. Natl. Acad. Sci. U.S.A.">
        <title>Trajectory and genomic determinants of fungal-pathogen speciation and host adaptation.</title>
        <authorList>
            <person name="Hu X."/>
            <person name="Xiao G."/>
            <person name="Zheng P."/>
            <person name="Shang Y."/>
            <person name="Su Y."/>
            <person name="Zhang X."/>
            <person name="Liu X."/>
            <person name="Zhan S."/>
            <person name="St Leger R.J."/>
            <person name="Wang C."/>
        </authorList>
    </citation>
    <scope>GENOME REANNOTATION</scope>
    <source>
        <strain>ARSEF 23 / ATCC MYA-3075</strain>
    </source>
</reference>
<reference key="3">
    <citation type="journal article" date="2015" name="Fungal Genet. Biol.">
        <title>Biosynthesis of non-melanin pigment by a divergent polyketide synthase in Metarhizium robertsii.</title>
        <authorList>
            <person name="Chen Y."/>
            <person name="Feng P."/>
            <person name="Shang Y."/>
            <person name="Xu Y.J."/>
            <person name="Wang C."/>
        </authorList>
    </citation>
    <scope>DISRUPTION PHENOTYPE</scope>
</reference>
<reference key="4">
    <citation type="journal article" date="2016" name="Environ. Microbiol.">
        <title>MAPK cascade-mediated regulation of pathogenicity, conidiation and tolerance to abiotic stresses in the entomopathogenic fungus Metarhizium robertsii.</title>
        <authorList>
            <person name="Chen X."/>
            <person name="Xu C."/>
            <person name="Qian Y."/>
            <person name="Liu R."/>
            <person name="Zhang Q."/>
            <person name="Zeng G."/>
            <person name="Zhang X."/>
            <person name="Zhao H."/>
            <person name="Fang W."/>
        </authorList>
    </citation>
    <scope>INDUCTION</scope>
</reference>
<reference key="5">
    <citation type="journal article" date="2018" name="PLoS Genet.">
        <title>Duplication of a Pks gene cluster and subsequent functional diversification facilitate environmental adaptation in Metarhizium species.</title>
        <authorList>
            <person name="Zeng G."/>
            <person name="Zhang P."/>
            <person name="Zhang Q."/>
            <person name="Zhao H."/>
            <person name="Li Z."/>
            <person name="Zhang X."/>
            <person name="Wang C."/>
            <person name="Yin W.B."/>
            <person name="Fang W."/>
        </authorList>
    </citation>
    <scope>IDENTIFICATION</scope>
    <scope>DISRUPTION PHENOTYPE</scope>
    <scope>FUNCTION</scope>
    <scope>INDUCTION</scope>
    <scope>DOMAIN</scope>
</reference>
<organism>
    <name type="scientific">Metarhizium robertsii (strain ARSEF 23 / ATCC MYA-3075)</name>
    <name type="common">Metarhizium anisopliae (strain ARSEF 23)</name>
    <dbReference type="NCBI Taxonomy" id="655844"/>
    <lineage>
        <taxon>Eukaryota</taxon>
        <taxon>Fungi</taxon>
        <taxon>Dikarya</taxon>
        <taxon>Ascomycota</taxon>
        <taxon>Pezizomycotina</taxon>
        <taxon>Sordariomycetes</taxon>
        <taxon>Hypocreomycetidae</taxon>
        <taxon>Hypocreales</taxon>
        <taxon>Clavicipitaceae</taxon>
        <taxon>Metarhizium</taxon>
    </lineage>
</organism>
<accession>E9ET39</accession>
<keyword id="KW-0511">Multifunctional enzyme</keyword>
<keyword id="KW-0596">Phosphopantetheine</keyword>
<keyword id="KW-0597">Phosphoprotein</keyword>
<keyword id="KW-0677">Repeat</keyword>
<keyword id="KW-0808">Transferase</keyword>
<sequence>MQPHRVFIFGDQTGGFATGLQQLLLDKTNPSLVYFVDHANLALRQELSRLPSTDRETLPLIGSVQDILTLHKKGERNVVIDSILSTVYHLACFIYKYGNAGCAYPNRQDVHVTGMCVGSLAAAAVSCSRSIGDVIVAGIVAIRAALRVGLRAHQAALLISNRAAPHTHWSYAVSTESLRLDLIKDALEKFAQDMDTSPLSHPYISAIGLDSVTVSGPPSHLHQFWRENTTFHKPIPIPIWAPYHGPHIFGDSDVETIIESLHPIPKLSQQAPIISSGSGVMASQTLADLIRAALRDILLHRLDLPALVGHIKDIFRSSPNQDFAMTPIATNAATSLVATTAKAAGNTGSVDNEIMDAAALAGSASRATSAKTHDSKIAIIGMSGRFPEAADLDSFWSLLEQGVDAYRPVPPDRFDAHAHHDETGRRKNTSKVLGGCWINQPGLFDPKFFSISPKEAEQSDPAQRLALQTAYEALEMAGVVPDRTQSTQRDRVGVFYGMVSDDWREINSGQNIDTYFIPGGIRAFTPGRINYHFKFSGPSITVDTACSSSLAAIHVACNSLWRGDCDTAVAGGVNVLTNPDIFAGLDRGHFLSTTGNCKTFDDDADGYCRADGVGTVILKRLEDAVMDKDPILAVLNSAYTNHSAEAVSITRPHAGAQELIFSKLLRETGIHPHDVSYIEMHGTGTQAGDATEMSSVLRTFAPDTGRLSSQTLHLGSAKSNVGHGEAASGVTSLIKVLLMMKHNTIPPHCGIKGRINHRFPTDLRERNVFIASQPVAWNKPHAGSGKRRVFINNFSAAGGNSALLLEDAPTDEHPETKDPRSTHIVAVSAKSSTSLANNLKRLRDFVQDNIHDLDSLSKLSYTTTARRIHYPFRAAMAVSSRDQLLQGIESVLLRDEMPKPGKSQKNIGFVFSGQGAQYAGMGRHLFHNNHTFRTQILACNQICLSHGFPSILEIFKQDVDMNSLEPLLVQLGTTCLQMSLVAFWKSLGVTPDFCIGHSLGEYAALQAAGVLSVSDTIYLTGIRARMLQEKCSAGSHAMLAVRAPLARVNALLDPAIHEVTCLNGPQDVVIGGRVADVEELEKELAKQDIKAVKVSVPFAFHSTQVEPILGEFCDAARGVPFQTQNIPVISTLLGEVVQPEATGVFGPGYLKRHCREPVNFAAAVEAARDANVIHAGTVFVEIGPHPVCLALLKSNMGPDAVTLASLHRKDDGWKVLADTLAALYQAGLKINWDEVHRDFASCQEVLPLPSYSWDNKNYWIQYVHNWTLTKGDEPAATAETTALQALDGLTSSVQKIIRQTDGPGSLVTIVVQSDFGSARLAEVAQGHKVNGEMLCTSSLYAEIGMTLGRQLLEKYRPDLDGYSTEIKDMSVDKPLILKDENKRTLFRAEVVHDKSTHTATMSIYSVDSAGNKTVDHARCLLRFADPTSWLDEWERTHYLIDRSVRWLEERAEQGTDSLLSRGIVYKLFSSLVDYSPSFKGLQEVILNSGDREAAAKVRLQAKKGDFDCNPMWIDSFGQLTGFLMNGHDFTGKDEVFINHGWRSMRCAKPFRKDAVYRTYIRMQHVEKTKYRGDLYIIEDGVIVAVFGGMTFLGMSRSLLNKVLPPRRGTDAINTAHPVAAAQQGMAASAKDTERRPLDIPTRAQRQPSSAQTGTMGRILAILSKEVGLSMETLTDDLVFADYGVDSLLSLTITGRIREELGLDMDSSIFTHYSTLGELKAFLGADQLPDDAVACESSNGQHTPQTSDKGSGTLAVQKTDDDTSPDMTLNRVCAIIAEEVGISVQELSSSQDFQELGIDSLSSLTILSRVREELQLDLESDFFDTHPSFYSLQKALCGSEAASNGAPEANETTPSSHRLESDLRSITWQSGQNIVASPPHATSILVSGSPSTARMILVLFPDGSGSAASYGALAPKIRRDIAVYALNCPWRTNGEEILRLGVTLDQMVAKHLVEVGRILDSHRHGRPGSANASVGLALGGWSAGGILALEAVRQLGEAGVAVQKMVLLDAPNPIGLQNPPPRMFHFLDELGILGAGKGKAPAWVLRHFDAMVNLLKSYRPRRLGAEDAPKCLIVYAKDGICKDPDGPRMDTKPDDAREMLWLLYNRVDFSAEGWKTLVGQQNLAVGVVDDVNHFSMMNPGPKMIEMGNLIGEFLLGPS</sequence>
<name>PKS2_METRA</name>